<name>RL11_STRP1</name>
<sequence length="141" mass="14801">MAKKVEKLVKLQIPAGKATPAPPVGPALGQAGINIMGFTKEFNARTADQAGMIIPVVISVYEDKSFDFITKTPPAAVLLKKAAGVEKGSGTPNTTKVATVTRAQVQEIAETKMPDLNAANIEAAMRMIEGTARSMGFTVTD</sequence>
<organism>
    <name type="scientific">Streptococcus pyogenes serotype M1</name>
    <dbReference type="NCBI Taxonomy" id="301447"/>
    <lineage>
        <taxon>Bacteria</taxon>
        <taxon>Bacillati</taxon>
        <taxon>Bacillota</taxon>
        <taxon>Bacilli</taxon>
        <taxon>Lactobacillales</taxon>
        <taxon>Streptococcaceae</taxon>
        <taxon>Streptococcus</taxon>
    </lineage>
</organism>
<accession>P66058</accession>
<accession>Q490H6</accession>
<accession>Q9A153</accession>
<evidence type="ECO:0000255" key="1">
    <source>
        <dbReference type="HAMAP-Rule" id="MF_00736"/>
    </source>
</evidence>
<evidence type="ECO:0000305" key="2"/>
<reference key="1">
    <citation type="journal article" date="2001" name="Proc. Natl. Acad. Sci. U.S.A.">
        <title>Complete genome sequence of an M1 strain of Streptococcus pyogenes.</title>
        <authorList>
            <person name="Ferretti J.J."/>
            <person name="McShan W.M."/>
            <person name="Ajdic D.J."/>
            <person name="Savic D.J."/>
            <person name="Savic G."/>
            <person name="Lyon K."/>
            <person name="Primeaux C."/>
            <person name="Sezate S."/>
            <person name="Suvorov A.N."/>
            <person name="Kenton S."/>
            <person name="Lai H.S."/>
            <person name="Lin S.P."/>
            <person name="Qian Y."/>
            <person name="Jia H.G."/>
            <person name="Najar F.Z."/>
            <person name="Ren Q."/>
            <person name="Zhu H."/>
            <person name="Song L."/>
            <person name="White J."/>
            <person name="Yuan X."/>
            <person name="Clifton S.W."/>
            <person name="Roe B.A."/>
            <person name="McLaughlin R.E."/>
        </authorList>
    </citation>
    <scope>NUCLEOTIDE SEQUENCE [LARGE SCALE GENOMIC DNA]</scope>
    <source>
        <strain>ATCC 700294 / SF370 / Serotype M1</strain>
    </source>
</reference>
<reference key="2">
    <citation type="journal article" date="2005" name="J. Infect. Dis.">
        <title>Evolutionary origin and emergence of a highly successful clone of serotype M1 group A Streptococcus involved multiple horizontal gene transfer events.</title>
        <authorList>
            <person name="Sumby P."/>
            <person name="Porcella S.F."/>
            <person name="Madrigal A.G."/>
            <person name="Barbian K.D."/>
            <person name="Virtaneva K."/>
            <person name="Ricklefs S.M."/>
            <person name="Sturdevant D.E."/>
            <person name="Graham M.R."/>
            <person name="Vuopio-Varkila J."/>
            <person name="Hoe N.P."/>
            <person name="Musser J.M."/>
        </authorList>
    </citation>
    <scope>NUCLEOTIDE SEQUENCE [LARGE SCALE GENOMIC DNA]</scope>
    <source>
        <strain>ATCC BAA-947 / MGAS5005 / Serotype M1</strain>
    </source>
</reference>
<keyword id="KW-0488">Methylation</keyword>
<keyword id="KW-1185">Reference proteome</keyword>
<keyword id="KW-0687">Ribonucleoprotein</keyword>
<keyword id="KW-0689">Ribosomal protein</keyword>
<keyword id="KW-0694">RNA-binding</keyword>
<keyword id="KW-0699">rRNA-binding</keyword>
<proteinExistence type="inferred from homology"/>
<dbReference type="EMBL" id="AE004092">
    <property type="protein sequence ID" value="AAK33474.1"/>
    <property type="molecule type" value="Genomic_DNA"/>
</dbReference>
<dbReference type="EMBL" id="CP000017">
    <property type="protein sequence ID" value="AAZ50992.1"/>
    <property type="molecule type" value="Genomic_DNA"/>
</dbReference>
<dbReference type="RefSeq" id="NP_268753.1">
    <property type="nucleotide sequence ID" value="NC_002737.2"/>
</dbReference>
<dbReference type="SMR" id="P66058"/>
<dbReference type="PaxDb" id="1314-HKU360_00406"/>
<dbReference type="KEGG" id="spy:SPy_0460"/>
<dbReference type="KEGG" id="spz:M5005_Spy0374"/>
<dbReference type="PATRIC" id="fig|160490.10.peg.388"/>
<dbReference type="HOGENOM" id="CLU_074237_2_1_9"/>
<dbReference type="OMA" id="CKQFNAK"/>
<dbReference type="PRO" id="PR:P66058"/>
<dbReference type="Proteomes" id="UP000000750">
    <property type="component" value="Chromosome"/>
</dbReference>
<dbReference type="GO" id="GO:0022625">
    <property type="term" value="C:cytosolic large ribosomal subunit"/>
    <property type="evidence" value="ECO:0007669"/>
    <property type="project" value="TreeGrafter"/>
</dbReference>
<dbReference type="GO" id="GO:0070180">
    <property type="term" value="F:large ribosomal subunit rRNA binding"/>
    <property type="evidence" value="ECO:0007669"/>
    <property type="project" value="UniProtKB-UniRule"/>
</dbReference>
<dbReference type="GO" id="GO:0003735">
    <property type="term" value="F:structural constituent of ribosome"/>
    <property type="evidence" value="ECO:0007669"/>
    <property type="project" value="InterPro"/>
</dbReference>
<dbReference type="GO" id="GO:0006412">
    <property type="term" value="P:translation"/>
    <property type="evidence" value="ECO:0007669"/>
    <property type="project" value="UniProtKB-UniRule"/>
</dbReference>
<dbReference type="CDD" id="cd00349">
    <property type="entry name" value="Ribosomal_L11"/>
    <property type="match status" value="1"/>
</dbReference>
<dbReference type="FunFam" id="1.10.10.250:FF:000001">
    <property type="entry name" value="50S ribosomal protein L11"/>
    <property type="match status" value="1"/>
</dbReference>
<dbReference type="FunFam" id="3.30.1550.10:FF:000001">
    <property type="entry name" value="50S ribosomal protein L11"/>
    <property type="match status" value="1"/>
</dbReference>
<dbReference type="Gene3D" id="1.10.10.250">
    <property type="entry name" value="Ribosomal protein L11, C-terminal domain"/>
    <property type="match status" value="1"/>
</dbReference>
<dbReference type="Gene3D" id="3.30.1550.10">
    <property type="entry name" value="Ribosomal protein L11/L12, N-terminal domain"/>
    <property type="match status" value="1"/>
</dbReference>
<dbReference type="HAMAP" id="MF_00736">
    <property type="entry name" value="Ribosomal_uL11"/>
    <property type="match status" value="1"/>
</dbReference>
<dbReference type="InterPro" id="IPR000911">
    <property type="entry name" value="Ribosomal_uL11"/>
</dbReference>
<dbReference type="InterPro" id="IPR006519">
    <property type="entry name" value="Ribosomal_uL11_bac-typ"/>
</dbReference>
<dbReference type="InterPro" id="IPR020783">
    <property type="entry name" value="Ribosomal_uL11_C"/>
</dbReference>
<dbReference type="InterPro" id="IPR036769">
    <property type="entry name" value="Ribosomal_uL11_C_sf"/>
</dbReference>
<dbReference type="InterPro" id="IPR020785">
    <property type="entry name" value="Ribosomal_uL11_CS"/>
</dbReference>
<dbReference type="InterPro" id="IPR020784">
    <property type="entry name" value="Ribosomal_uL11_N"/>
</dbReference>
<dbReference type="InterPro" id="IPR036796">
    <property type="entry name" value="Ribosomal_uL11_N_sf"/>
</dbReference>
<dbReference type="NCBIfam" id="TIGR01632">
    <property type="entry name" value="L11_bact"/>
    <property type="match status" value="1"/>
</dbReference>
<dbReference type="PANTHER" id="PTHR11661">
    <property type="entry name" value="60S RIBOSOMAL PROTEIN L12"/>
    <property type="match status" value="1"/>
</dbReference>
<dbReference type="PANTHER" id="PTHR11661:SF1">
    <property type="entry name" value="LARGE RIBOSOMAL SUBUNIT PROTEIN UL11M"/>
    <property type="match status" value="1"/>
</dbReference>
<dbReference type="Pfam" id="PF00298">
    <property type="entry name" value="Ribosomal_L11"/>
    <property type="match status" value="1"/>
</dbReference>
<dbReference type="Pfam" id="PF03946">
    <property type="entry name" value="Ribosomal_L11_N"/>
    <property type="match status" value="1"/>
</dbReference>
<dbReference type="SMART" id="SM00649">
    <property type="entry name" value="RL11"/>
    <property type="match status" value="1"/>
</dbReference>
<dbReference type="SUPFAM" id="SSF54747">
    <property type="entry name" value="Ribosomal L11/L12e N-terminal domain"/>
    <property type="match status" value="1"/>
</dbReference>
<dbReference type="SUPFAM" id="SSF46906">
    <property type="entry name" value="Ribosomal protein L11, C-terminal domain"/>
    <property type="match status" value="1"/>
</dbReference>
<dbReference type="PROSITE" id="PS00359">
    <property type="entry name" value="RIBOSOMAL_L11"/>
    <property type="match status" value="1"/>
</dbReference>
<protein>
    <recommendedName>
        <fullName evidence="1">Large ribosomal subunit protein uL11</fullName>
    </recommendedName>
    <alternativeName>
        <fullName evidence="2">50S ribosomal protein L11</fullName>
    </alternativeName>
</protein>
<gene>
    <name evidence="1" type="primary">rplK</name>
    <name type="synonym">rl11</name>
    <name type="ordered locus">SPy_0460</name>
    <name type="ordered locus">M5005_Spy0374</name>
</gene>
<feature type="chain" id="PRO_0000104385" description="Large ribosomal subunit protein uL11">
    <location>
        <begin position="1"/>
        <end position="141"/>
    </location>
</feature>
<comment type="function">
    <text evidence="1">Forms part of the ribosomal stalk which helps the ribosome interact with GTP-bound translation factors.</text>
</comment>
<comment type="subunit">
    <text evidence="1">Part of the ribosomal stalk of the 50S ribosomal subunit. Interacts with L10 and the large rRNA to form the base of the stalk. L10 forms an elongated spine to which L12 dimers bind in a sequential fashion forming a multimeric L10(L12)X complex.</text>
</comment>
<comment type="PTM">
    <text evidence="1">One or more lysine residues are methylated.</text>
</comment>
<comment type="similarity">
    <text evidence="1">Belongs to the universal ribosomal protein uL11 family.</text>
</comment>